<name>NOD4A_XENLA</name>
<dbReference type="EMBL" id="U79162">
    <property type="protein sequence ID" value="AAC60127.1"/>
    <property type="molecule type" value="mRNA"/>
</dbReference>
<dbReference type="RefSeq" id="NP_001081816.1">
    <property type="nucleotide sequence ID" value="NM_001088347.1"/>
</dbReference>
<dbReference type="GlyCosmos" id="O13048">
    <property type="glycosylation" value="3 sites, No reported glycans"/>
</dbReference>
<dbReference type="GeneID" id="398068"/>
<dbReference type="KEGG" id="xla:398068"/>
<dbReference type="AGR" id="Xenbase:XB-GENE-864954"/>
<dbReference type="CTD" id="398068"/>
<dbReference type="Xenbase" id="XB-GENE-864954">
    <property type="gene designation" value="nodal.L"/>
</dbReference>
<dbReference type="OrthoDB" id="5949851at2759"/>
<dbReference type="Proteomes" id="UP000186698">
    <property type="component" value="Chromosome 7L"/>
</dbReference>
<dbReference type="GO" id="GO:0005615">
    <property type="term" value="C:extracellular space"/>
    <property type="evidence" value="ECO:0000318"/>
    <property type="project" value="GO_Central"/>
</dbReference>
<dbReference type="GO" id="GO:0005125">
    <property type="term" value="F:cytokine activity"/>
    <property type="evidence" value="ECO:0000318"/>
    <property type="project" value="GO_Central"/>
</dbReference>
<dbReference type="GO" id="GO:0008083">
    <property type="term" value="F:growth factor activity"/>
    <property type="evidence" value="ECO:0007669"/>
    <property type="project" value="UniProtKB-KW"/>
</dbReference>
<dbReference type="GO" id="GO:0009950">
    <property type="term" value="P:dorsal/ventral axis specification"/>
    <property type="evidence" value="ECO:0000315"/>
    <property type="project" value="Xenbase"/>
</dbReference>
<dbReference type="CDD" id="cd13759">
    <property type="entry name" value="TGF_beta_NODAL"/>
    <property type="match status" value="1"/>
</dbReference>
<dbReference type="FunFam" id="2.10.90.10:FF:000026">
    <property type="entry name" value="Nodal homolog 3-A"/>
    <property type="match status" value="1"/>
</dbReference>
<dbReference type="Gene3D" id="2.10.90.10">
    <property type="entry name" value="Cystine-knot cytokines"/>
    <property type="match status" value="1"/>
</dbReference>
<dbReference type="InterPro" id="IPR029034">
    <property type="entry name" value="Cystine-knot_cytokine"/>
</dbReference>
<dbReference type="InterPro" id="IPR001839">
    <property type="entry name" value="TGF-b_C"/>
</dbReference>
<dbReference type="InterPro" id="IPR015615">
    <property type="entry name" value="TGF-beta-rel"/>
</dbReference>
<dbReference type="InterPro" id="IPR017948">
    <property type="entry name" value="TGFb_CS"/>
</dbReference>
<dbReference type="PANTHER" id="PTHR11848:SF299">
    <property type="entry name" value="NODAL HOMOLOG 4-A"/>
    <property type="match status" value="1"/>
</dbReference>
<dbReference type="PANTHER" id="PTHR11848">
    <property type="entry name" value="TGF-BETA FAMILY"/>
    <property type="match status" value="1"/>
</dbReference>
<dbReference type="Pfam" id="PF00019">
    <property type="entry name" value="TGF_beta"/>
    <property type="match status" value="1"/>
</dbReference>
<dbReference type="SMART" id="SM00204">
    <property type="entry name" value="TGFB"/>
    <property type="match status" value="1"/>
</dbReference>
<dbReference type="SUPFAM" id="SSF57501">
    <property type="entry name" value="Cystine-knot cytokines"/>
    <property type="match status" value="1"/>
</dbReference>
<dbReference type="PROSITE" id="PS00250">
    <property type="entry name" value="TGF_BETA_1"/>
    <property type="match status" value="1"/>
</dbReference>
<dbReference type="PROSITE" id="PS51362">
    <property type="entry name" value="TGF_BETA_2"/>
    <property type="match status" value="1"/>
</dbReference>
<reference evidence="10 11" key="1">
    <citation type="journal article" date="1997" name="Dev. Biol.">
        <title>Xnr4: a Xenopus nodal-related gene expressed in the Spemann organizer.</title>
        <authorList>
            <person name="Joseph E.M."/>
            <person name="Melton D.A."/>
        </authorList>
    </citation>
    <scope>NUCLEOTIDE SEQUENCE [MRNA]</scope>
    <scope>FUNCTION</scope>
    <scope>TISSUE SPECIFICITY</scope>
    <scope>DEVELOPMENTAL STAGE</scope>
    <source>
        <tissue evidence="9">Gastrula</tissue>
    </source>
</reference>
<reference evidence="10" key="2">
    <citation type="journal article" date="1999" name="Development">
        <title>Xenopus nodal-related signaling is essential for mesendodermal patterning during early embryogenesis.</title>
        <authorList>
            <person name="Osada S."/>
            <person name="Wright C.V.E."/>
        </authorList>
    </citation>
    <scope>FUNCTION</scope>
    <scope>INDUCTION</scope>
</reference>
<reference evidence="10" key="3">
    <citation type="journal article" date="1999" name="Development">
        <title>Mesoderm induction in Xenopus is a zygotic event regulated by maternal VegT via TGFbeta growth factors.</title>
        <authorList>
            <person name="Kofron M."/>
            <person name="Demel T."/>
            <person name="Xanthos J."/>
            <person name="Lohr J."/>
            <person name="Sun B."/>
            <person name="Sive H."/>
            <person name="Osada S."/>
            <person name="Wright C.V.E."/>
            <person name="Wylie C."/>
            <person name="Heasman J."/>
        </authorList>
    </citation>
    <scope>FUNCTION</scope>
    <scope>INDUCTION</scope>
</reference>
<reference evidence="10" key="4">
    <citation type="journal article" date="2000" name="Development">
        <title>Endodermal Nodal-related signals and mesoderm induction in Xenopus.</title>
        <authorList>
            <person name="Agius E."/>
            <person name="Oelgeschlaeger M."/>
            <person name="Wessely O."/>
            <person name="Kemp C."/>
            <person name="De Robertis E.M."/>
        </authorList>
    </citation>
    <scope>TISSUE SPECIFICITY</scope>
    <scope>DEVELOPMENTAL STAGE</scope>
    <scope>INDUCTION</scope>
</reference>
<reference evidence="10" key="5">
    <citation type="journal article" date="2002" name="Dev. Biol.">
        <title>Multiple nodal-related genes act coordinately in Xenopus embryogenesis.</title>
        <authorList>
            <person name="Onuma Y."/>
            <person name="Takahashi S."/>
            <person name="Yokota C."/>
            <person name="Asashima M."/>
        </authorList>
    </citation>
    <scope>FUNCTION</scope>
    <scope>INDUCTION</scope>
</reference>
<reference evidence="10" key="6">
    <citation type="journal article" date="2006" name="Development">
        <title>Global analysis of the transcriptional network controlling Xenopus endoderm formation.</title>
        <authorList>
            <person name="Sinner D."/>
            <person name="Kirilenko P."/>
            <person name="Rankin S."/>
            <person name="Wei E."/>
            <person name="Howard L."/>
            <person name="Kofron M."/>
            <person name="Heasman J."/>
            <person name="Woodland H.R."/>
            <person name="Zorn A.M."/>
        </authorList>
    </citation>
    <scope>FUNCTION</scope>
    <scope>INDUCTION</scope>
</reference>
<accession>O13048</accession>
<protein>
    <recommendedName>
        <fullName>Nodal homolog 4-A</fullName>
    </recommendedName>
    <alternativeName>
        <fullName>Nodal-related protein 4-A</fullName>
    </alternativeName>
    <alternativeName>
        <fullName>Xnr-4</fullName>
    </alternativeName>
    <alternativeName>
        <fullName>Xnr4</fullName>
    </alternativeName>
</protein>
<sequence>MHLYFYCLILLFVPGGNSLGINSYLKHMSNKPQDHVNRTKTVDSKDLAALPLSSYMLNLYQSFHHSELNHGTEGAPSLPSNHRADIIRSLAAKSFDHGGSRWTLVFDFSSLSQEEEHQLAEVRFDFRAFEGAISAEMEVMVDFLHQSSSCQSISGWCQSYLYVGSLTGTLRSRSSDTWVTFEATDIIHKWFERNEKGKSRYEDREKQLKKLPRAKSAERRYQQQNTEDQQIVMMVYSNISKKERLSGTATLLQDAAHSKYLVVMPGIQTIAHTRRHRRSHIFKEHVMGMKHVPPADSSRTLCRRVDFFVDFKQIGWDSWIIHPMKYNAYRCEGECPSPVNESVKPNNHAYMQSLLNYYVKGKAPEVCCVPIRMSSLSMVYYDHDDIAFQNHEGMIVEECGCQ</sequence>
<comment type="function">
    <text evidence="4 5 7 8 9">Cooperation and regulatory loops of multiple nodals are essential for mesendoderm patterning in early embryos. Plays a role in mesoderm formation and may be required for neural development.</text>
</comment>
<comment type="subunit">
    <text evidence="1">Homodimer; disulfide-linked.</text>
</comment>
<comment type="subcellular location">
    <subcellularLocation>
        <location evidence="2">Secreted</location>
    </subcellularLocation>
</comment>
<comment type="tissue specificity">
    <text evidence="6 9">During blastula stages, expressed in the endoderm at a higher level dorsally than ventrally. Expressed in the deep cells of the Spemann organizer at the gastrula stage. Expressed in the notochord (a derivative of the organizer) and neural tube during the neural stages.</text>
</comment>
<comment type="developmental stage">
    <text evidence="6 9">Expressed zygotically. First expressed at the midblastula transition (MBT).</text>
</comment>
<comment type="induction">
    <text evidence="4 5 6 7 8">By dorsal-mesoderm inducing signals including vegt and other nodal-related proteins. By sox17.</text>
</comment>
<comment type="similarity">
    <text evidence="3">Belongs to the TGF-beta family.</text>
</comment>
<organism>
    <name type="scientific">Xenopus laevis</name>
    <name type="common">African clawed frog</name>
    <dbReference type="NCBI Taxonomy" id="8355"/>
    <lineage>
        <taxon>Eukaryota</taxon>
        <taxon>Metazoa</taxon>
        <taxon>Chordata</taxon>
        <taxon>Craniata</taxon>
        <taxon>Vertebrata</taxon>
        <taxon>Euteleostomi</taxon>
        <taxon>Amphibia</taxon>
        <taxon>Batrachia</taxon>
        <taxon>Anura</taxon>
        <taxon>Pipoidea</taxon>
        <taxon>Pipidae</taxon>
        <taxon>Xenopodinae</taxon>
        <taxon>Xenopus</taxon>
        <taxon>Xenopus</taxon>
    </lineage>
</organism>
<proteinExistence type="evidence at transcript level"/>
<gene>
    <name type="primary">nodal4-a</name>
    <name evidence="11" type="synonym">nr4</name>
</gene>
<feature type="signal peptide" evidence="3">
    <location>
        <begin position="1"/>
        <end position="18"/>
    </location>
</feature>
<feature type="propeptide" id="PRO_0000334505" evidence="3">
    <location>
        <begin position="19"/>
        <end position="278"/>
    </location>
</feature>
<feature type="chain" id="PRO_0000334506" description="Nodal homolog 4-A" evidence="3">
    <location>
        <begin position="279"/>
        <end position="402"/>
    </location>
</feature>
<feature type="glycosylation site" description="N-linked (GlcNAc...) asparagine" evidence="3">
    <location>
        <position position="37"/>
    </location>
</feature>
<feature type="glycosylation site" description="N-linked (GlcNAc...) asparagine" evidence="3">
    <location>
        <position position="238"/>
    </location>
</feature>
<feature type="glycosylation site" description="N-linked (GlcNAc...) asparagine" evidence="3">
    <location>
        <position position="340"/>
    </location>
</feature>
<feature type="disulfide bond" evidence="1">
    <location>
        <begin position="302"/>
        <end position="368"/>
    </location>
</feature>
<feature type="disulfide bond" evidence="1">
    <location>
        <begin position="331"/>
        <end position="399"/>
    </location>
</feature>
<feature type="disulfide bond" evidence="1">
    <location>
        <begin position="335"/>
        <end position="401"/>
    </location>
</feature>
<feature type="disulfide bond" description="Interchain" evidence="1">
    <location>
        <position position="367"/>
    </location>
</feature>
<evidence type="ECO:0000250" key="1">
    <source>
        <dbReference type="UniProtKB" id="P43021"/>
    </source>
</evidence>
<evidence type="ECO:0000250" key="2">
    <source>
        <dbReference type="UniProtKB" id="Q91620"/>
    </source>
</evidence>
<evidence type="ECO:0000255" key="3"/>
<evidence type="ECO:0000269" key="4">
    <source>
    </source>
</evidence>
<evidence type="ECO:0000269" key="5">
    <source>
    </source>
</evidence>
<evidence type="ECO:0000269" key="6">
    <source>
    </source>
</evidence>
<evidence type="ECO:0000269" key="7">
    <source>
    </source>
</evidence>
<evidence type="ECO:0000269" key="8">
    <source>
    </source>
</evidence>
<evidence type="ECO:0000269" key="9">
    <source>
    </source>
</evidence>
<evidence type="ECO:0000305" key="10"/>
<evidence type="ECO:0000312" key="11">
    <source>
        <dbReference type="EMBL" id="AAC60127.1"/>
    </source>
</evidence>
<keyword id="KW-0165">Cleavage on pair of basic residues</keyword>
<keyword id="KW-0217">Developmental protein</keyword>
<keyword id="KW-1015">Disulfide bond</keyword>
<keyword id="KW-0325">Glycoprotein</keyword>
<keyword id="KW-0339">Growth factor</keyword>
<keyword id="KW-1185">Reference proteome</keyword>
<keyword id="KW-0964">Secreted</keyword>
<keyword id="KW-0732">Signal</keyword>